<accession>A0A1L2FZD4</accession>
<accession>C0HK17</accession>
<protein>
    <recommendedName>
        <fullName evidence="4">Potassium channel toxin alpha-KTx 8.8</fullName>
    </recommendedName>
    <alternativeName>
        <fullName evidence="4">OSK3</fullName>
    </alternativeName>
</protein>
<dbReference type="EMBL" id="KX355614">
    <property type="protein sequence ID" value="AOG62199.1"/>
    <property type="molecule type" value="mRNA"/>
</dbReference>
<dbReference type="SMR" id="A0A1L2FZD4"/>
<dbReference type="GO" id="GO:0005576">
    <property type="term" value="C:extracellular region"/>
    <property type="evidence" value="ECO:0000314"/>
    <property type="project" value="UniProtKB"/>
</dbReference>
<dbReference type="GO" id="GO:0008200">
    <property type="term" value="F:ion channel inhibitor activity"/>
    <property type="evidence" value="ECO:0007669"/>
    <property type="project" value="InterPro"/>
</dbReference>
<dbReference type="GO" id="GO:0015459">
    <property type="term" value="F:potassium channel regulator activity"/>
    <property type="evidence" value="ECO:0007669"/>
    <property type="project" value="UniProtKB-KW"/>
</dbReference>
<dbReference type="GO" id="GO:0090729">
    <property type="term" value="F:toxin activity"/>
    <property type="evidence" value="ECO:0007669"/>
    <property type="project" value="UniProtKB-KW"/>
</dbReference>
<dbReference type="GO" id="GO:0044562">
    <property type="term" value="P:envenomation resulting in negative regulation of voltage-gated potassium channel activity in another organism"/>
    <property type="evidence" value="ECO:0000314"/>
    <property type="project" value="UniProtKB"/>
</dbReference>
<dbReference type="InterPro" id="IPR036574">
    <property type="entry name" value="Scorpion_toxin-like_sf"/>
</dbReference>
<dbReference type="InterPro" id="IPR008911">
    <property type="entry name" value="Toxin_alpha-KTx_8/9"/>
</dbReference>
<dbReference type="Pfam" id="PF05453">
    <property type="entry name" value="Toxin_6"/>
    <property type="match status" value="1"/>
</dbReference>
<dbReference type="SUPFAM" id="SSF57095">
    <property type="entry name" value="Scorpion toxin-like"/>
    <property type="match status" value="1"/>
</dbReference>
<reference key="1">
    <citation type="journal article" date="2017" name="Biochim. Biophys. Acta">
        <title>C-Terminal residues in small potassium channel blockers OdK1 and OSK3 from scorpion venom fine-tune the selectivity.</title>
        <authorList>
            <person name="Kuzmenkov A.I."/>
            <person name="Peigneur S."/>
            <person name="Chugunov A.O."/>
            <person name="Tabakmakher V.M."/>
            <person name="Efremov R.G."/>
            <person name="Tytgat J."/>
            <person name="Grishin E.V."/>
            <person name="Vassilevski A.A."/>
        </authorList>
    </citation>
    <scope>NUCLEOTIDE SEQUENCE [MRNA]</scope>
    <scope>PROTEIN SEQUENCE OF 29-57</scope>
    <scope>FUNCTION</scope>
    <scope>SUBCELLULAR LOCATION</scope>
    <scope>PRESENCE OF DISULFIDE BONDS</scope>
    <scope>MASS SPECTROMETRY</scope>
    <source>
        <tissue>Venom</tissue>
        <tissue>Venom gland</tissue>
    </source>
</reference>
<keyword id="KW-0903">Direct protein sequencing</keyword>
<keyword id="KW-1015">Disulfide bond</keyword>
<keyword id="KW-0872">Ion channel impairing toxin</keyword>
<keyword id="KW-0632">Potassium channel impairing toxin</keyword>
<keyword id="KW-0964">Secreted</keyword>
<keyword id="KW-0732">Signal</keyword>
<keyword id="KW-0800">Toxin</keyword>
<keyword id="KW-1220">Voltage-gated potassium channel impairing toxin</keyword>
<organism>
    <name type="scientific">Orthochirus scrobiculosus</name>
    <name type="common">Central Asian scorpion</name>
    <dbReference type="NCBI Taxonomy" id="6892"/>
    <lineage>
        <taxon>Eukaryota</taxon>
        <taxon>Metazoa</taxon>
        <taxon>Ecdysozoa</taxon>
        <taxon>Arthropoda</taxon>
        <taxon>Chelicerata</taxon>
        <taxon>Arachnida</taxon>
        <taxon>Scorpiones</taxon>
        <taxon>Buthida</taxon>
        <taxon>Buthoidea</taxon>
        <taxon>Buthidae</taxon>
        <taxon>Orthochirus</taxon>
    </lineage>
</organism>
<sequence length="57" mass="6386">MCRLYAIILIVLVMNVIMTIIPDSKVEVVSCEDCPEHCSTQKARAKCDNDKCVCEPI</sequence>
<proteinExistence type="evidence at protein level"/>
<evidence type="ECO:0000250" key="1">
    <source>
        <dbReference type="UniProtKB" id="P56215"/>
    </source>
</evidence>
<evidence type="ECO:0000255" key="2"/>
<evidence type="ECO:0000269" key="3">
    <source>
    </source>
</evidence>
<evidence type="ECO:0000303" key="4">
    <source>
    </source>
</evidence>
<evidence type="ECO:0000305" key="5"/>
<evidence type="ECO:0000305" key="6">
    <source>
    </source>
</evidence>
<name>KAX88_ORTSC</name>
<feature type="signal peptide" evidence="2">
    <location>
        <begin position="1"/>
        <end position="19"/>
    </location>
</feature>
<feature type="propeptide" id="PRO_0000439599" evidence="6">
    <location>
        <begin position="20"/>
        <end position="28"/>
    </location>
</feature>
<feature type="peptide" id="PRO_0000439600" description="Potassium channel toxin alpha-KTx 8.8" evidence="3">
    <location>
        <begin position="29"/>
        <end position="57"/>
    </location>
</feature>
<feature type="disulfide bond" evidence="1">
    <location>
        <begin position="31"/>
        <end position="47"/>
    </location>
</feature>
<feature type="disulfide bond" evidence="1">
    <location>
        <begin position="34"/>
        <end position="52"/>
    </location>
</feature>
<feature type="disulfide bond" evidence="1">
    <location>
        <begin position="38"/>
        <end position="54"/>
    </location>
</feature>
<comment type="function">
    <text evidence="3">Selectively inhibits voltage-gated potassium channels rKv1.2/KCNA2 (IC(50)=331 nM) and hKv1.3/KCNA3 (IC(50)=503 nM). Partially inihibts rKv1.6/KCNA6 (IC(50)=9983 nM).</text>
</comment>
<comment type="subcellular location">
    <subcellularLocation>
        <location evidence="3">Secreted</location>
    </subcellularLocation>
</comment>
<comment type="tissue specificity">
    <text evidence="6">Expressed by the venom gland.</text>
</comment>
<comment type="domain">
    <text evidence="1">Has the structural arrangement of an alpha-helix connected to a beta-sheet by disulfide bonds (CSalpha/beta).</text>
</comment>
<comment type="PTM">
    <text evidence="3">Contains 3 disulfide bonds.</text>
</comment>
<comment type="mass spectrometry" mass="3206.3" error="0.2" method="MALDI" evidence="3"/>
<comment type="miscellaneous">
    <text evidence="3">Negative results: does not affect the following channels: rKv1.1/KCNA1, rKv1.4/KCNA4, rKv1.5/KCNA5, Shaker IR (with inactivation domain removed), rKv2.1/KCNB1, hKv3.1/KCNC1, rKv4.2/KCND2 and hKv11.1/KCNH2/ERG1.</text>
</comment>
<comment type="similarity">
    <text evidence="5">Belongs to the short scorpion toxin superfamily. Potassium channel inhibitor family. Alpha-KTx 08 subfamily.</text>
</comment>